<sequence length="732" mass="81448">MDTSGHFHDSGVGDLDEDPKCPCPSSGDEQQQQQQPPPPSAPPAVPQQPPGPLLQPQPPQLQQQQQQQQQQQQQQQQQQQAPLHPLPQLAQLQSQLVHPGLLHSSPTAFRAPNSANSTAILHPSSRQGSQLNLNDHLLGHSPSSTATSGPGGGSRHRQASPLVHRRDSNPFTEIAMSSCKYSGGVMKPLSRLSASRRNLIEAEPEGQPLQLFSPSNPPEIIISSREDNHAHQTLLHHPNATHNHQHAGTTAGSTTFPKANKRKNQNIGYKLGHRRALFEKRKRLSDYALIFGMFGIVVMVIETELSWGLYSKDSMFSLALKCLISLSTIILLGLIIAYHTREVQLFVIDNGADDWRIAMTYERILYISLEMLVCAIHPIPGEYKFFWTARLAFSYTPSRAEADVDIILSIPMFLRLYLIARVMLLHSKLFTDASSRSIGALNKINFNTRFVMKTLMTICPGTVLLVFSISLWIIAAWTVRVCERYHDQQDVTSNFLGAMWLISITFLSIGYGDMVPHTYCGKGVCLLTGIMGAGCTALVVAVVARKLELTKAEKHVHNFMMDTQLTKRIKNAAANVLRETWLIYKHTKLLKKIDHAKVRKHQRKFLQAIHQLRGVKMEQRKLSDQANTLVDLSKMQNVMYDLITELNDRSEDLEKQIGSLESKLEHLTASFNSLPLLIADTLRQQQQQLLTAFVEARGISVAVGTSHAPPSDSPIGISSTSFPTPYTSSSSC</sequence>
<evidence type="ECO:0000250" key="1"/>
<evidence type="ECO:0000250" key="2">
    <source>
        <dbReference type="UniProtKB" id="P58391"/>
    </source>
</evidence>
<evidence type="ECO:0000250" key="3">
    <source>
        <dbReference type="UniProtKB" id="P70604"/>
    </source>
</evidence>
<evidence type="ECO:0000250" key="4">
    <source>
        <dbReference type="UniProtKB" id="Q9UGI6"/>
    </source>
</evidence>
<evidence type="ECO:0000255" key="5"/>
<evidence type="ECO:0000256" key="6">
    <source>
        <dbReference type="SAM" id="MobiDB-lite"/>
    </source>
</evidence>
<evidence type="ECO:0000269" key="7">
    <source>
    </source>
</evidence>
<evidence type="ECO:0000269" key="8">
    <source>
    </source>
</evidence>
<evidence type="ECO:0000269" key="9">
    <source>
    </source>
</evidence>
<evidence type="ECO:0000305" key="10"/>
<evidence type="ECO:0000312" key="11">
    <source>
        <dbReference type="RGD" id="2964"/>
    </source>
</evidence>
<dbReference type="EMBL" id="U69884">
    <property type="protein sequence ID" value="AAB81653.1"/>
    <property type="molecule type" value="mRNA"/>
</dbReference>
<dbReference type="EMBL" id="AF292389">
    <property type="protein sequence ID" value="AAG13967.1"/>
    <property type="molecule type" value="mRNA"/>
</dbReference>
<dbReference type="EMBL" id="AF284345">
    <property type="protein sequence ID" value="AAG38878.1"/>
    <property type="molecule type" value="mRNA"/>
</dbReference>
<dbReference type="RefSeq" id="NP_062188.2">
    <property type="nucleotide sequence ID" value="NM_019315.2"/>
</dbReference>
<dbReference type="SMR" id="P70605"/>
<dbReference type="FunCoup" id="P70605">
    <property type="interactions" value="1367"/>
</dbReference>
<dbReference type="IntAct" id="P70605">
    <property type="interactions" value="1"/>
</dbReference>
<dbReference type="STRING" id="10116.ENSRNOP00000028117"/>
<dbReference type="BindingDB" id="P70605"/>
<dbReference type="ChEMBL" id="CHEMBL3780"/>
<dbReference type="DrugCentral" id="P70605"/>
<dbReference type="GuidetoPHARMACOLOGY" id="383"/>
<dbReference type="PhosphoSitePlus" id="P70605"/>
<dbReference type="PaxDb" id="10116-ENSRNOP00000028117"/>
<dbReference type="GeneID" id="54263"/>
<dbReference type="KEGG" id="rno:54263"/>
<dbReference type="UCSC" id="RGD:2964">
    <property type="organism name" value="rat"/>
</dbReference>
<dbReference type="AGR" id="RGD:2964"/>
<dbReference type="CTD" id="3782"/>
<dbReference type="RGD" id="2964">
    <property type="gene designation" value="Kcnn3"/>
</dbReference>
<dbReference type="eggNOG" id="KOG3684">
    <property type="taxonomic scope" value="Eukaryota"/>
</dbReference>
<dbReference type="InParanoid" id="P70605"/>
<dbReference type="PhylomeDB" id="P70605"/>
<dbReference type="Reactome" id="R-RNO-1296052">
    <property type="pathway name" value="Ca2+ activated K+ channels"/>
</dbReference>
<dbReference type="PRO" id="PR:P70605"/>
<dbReference type="Proteomes" id="UP000002494">
    <property type="component" value="Unplaced"/>
</dbReference>
<dbReference type="GO" id="GO:0044297">
    <property type="term" value="C:cell body"/>
    <property type="evidence" value="ECO:0000314"/>
    <property type="project" value="RGD"/>
</dbReference>
<dbReference type="GO" id="GO:0005737">
    <property type="term" value="C:cytoplasm"/>
    <property type="evidence" value="ECO:0000266"/>
    <property type="project" value="RGD"/>
</dbReference>
<dbReference type="GO" id="GO:0030175">
    <property type="term" value="C:filopodium"/>
    <property type="evidence" value="ECO:0000314"/>
    <property type="project" value="RGD"/>
</dbReference>
<dbReference type="GO" id="GO:0031594">
    <property type="term" value="C:neuromuscular junction"/>
    <property type="evidence" value="ECO:0000314"/>
    <property type="project" value="RGD"/>
</dbReference>
<dbReference type="GO" id="GO:0043005">
    <property type="term" value="C:neuron projection"/>
    <property type="evidence" value="ECO:0000318"/>
    <property type="project" value="GO_Central"/>
</dbReference>
<dbReference type="GO" id="GO:0043025">
    <property type="term" value="C:neuronal cell body"/>
    <property type="evidence" value="ECO:0000314"/>
    <property type="project" value="RGD"/>
</dbReference>
<dbReference type="GO" id="GO:0005886">
    <property type="term" value="C:plasma membrane"/>
    <property type="evidence" value="ECO:0000266"/>
    <property type="project" value="RGD"/>
</dbReference>
<dbReference type="GO" id="GO:0030018">
    <property type="term" value="C:Z disc"/>
    <property type="evidence" value="ECO:0007669"/>
    <property type="project" value="UniProtKB-SubCell"/>
</dbReference>
<dbReference type="GO" id="GO:0005516">
    <property type="term" value="F:calmodulin binding"/>
    <property type="evidence" value="ECO:0000266"/>
    <property type="project" value="RGD"/>
</dbReference>
<dbReference type="GO" id="GO:0005242">
    <property type="term" value="F:inward rectifier potassium channel activity"/>
    <property type="evidence" value="ECO:0000266"/>
    <property type="project" value="RGD"/>
</dbReference>
<dbReference type="GO" id="GO:0044877">
    <property type="term" value="F:protein-containing complex binding"/>
    <property type="evidence" value="ECO:0000315"/>
    <property type="project" value="RGD"/>
</dbReference>
<dbReference type="GO" id="GO:0016286">
    <property type="term" value="F:small conductance calcium-activated potassium channel activity"/>
    <property type="evidence" value="ECO:0000315"/>
    <property type="project" value="RGD"/>
</dbReference>
<dbReference type="GO" id="GO:0071805">
    <property type="term" value="P:potassium ion transmembrane transport"/>
    <property type="evidence" value="ECO:0000266"/>
    <property type="project" value="RGD"/>
</dbReference>
<dbReference type="GO" id="GO:0006813">
    <property type="term" value="P:potassium ion transport"/>
    <property type="evidence" value="ECO:0000315"/>
    <property type="project" value="RGD"/>
</dbReference>
<dbReference type="FunFam" id="1.10.287.70:FF:000022">
    <property type="entry name" value="Small conductance calcium-activated potassium channel, isoform O"/>
    <property type="match status" value="1"/>
</dbReference>
<dbReference type="FunFam" id="1.10.287.70:FF:000027">
    <property type="entry name" value="Small conductance calcium-activated potassium channel, isoform O"/>
    <property type="match status" value="1"/>
</dbReference>
<dbReference type="Gene3D" id="1.10.287.70">
    <property type="match status" value="2"/>
</dbReference>
<dbReference type="InterPro" id="IPR004178">
    <property type="entry name" value="CaM-bd_dom"/>
</dbReference>
<dbReference type="InterPro" id="IPR036122">
    <property type="entry name" value="CaM-bd_dom_sf"/>
</dbReference>
<dbReference type="InterPro" id="IPR015449">
    <property type="entry name" value="K_chnl_Ca-activ_SK"/>
</dbReference>
<dbReference type="InterPro" id="IPR013099">
    <property type="entry name" value="K_chnl_dom"/>
</dbReference>
<dbReference type="PANTHER" id="PTHR10153">
    <property type="entry name" value="SMALL CONDUCTANCE CALCIUM-ACTIVATED POTASSIUM CHANNEL"/>
    <property type="match status" value="1"/>
</dbReference>
<dbReference type="Pfam" id="PF02888">
    <property type="entry name" value="CaMBD"/>
    <property type="match status" value="1"/>
</dbReference>
<dbReference type="Pfam" id="PF07885">
    <property type="entry name" value="Ion_trans_2"/>
    <property type="match status" value="1"/>
</dbReference>
<dbReference type="Pfam" id="PF03530">
    <property type="entry name" value="SK_channel"/>
    <property type="match status" value="1"/>
</dbReference>
<dbReference type="PRINTS" id="PR01451">
    <property type="entry name" value="SKCHANNEL"/>
</dbReference>
<dbReference type="SMART" id="SM01053">
    <property type="entry name" value="CaMBD"/>
    <property type="match status" value="1"/>
</dbReference>
<dbReference type="SUPFAM" id="SSF81995">
    <property type="entry name" value="beta-sandwich domain of Sec23/24"/>
    <property type="match status" value="1"/>
</dbReference>
<dbReference type="SUPFAM" id="SSF81327">
    <property type="entry name" value="Small-conductance potassium channel"/>
    <property type="match status" value="1"/>
</dbReference>
<dbReference type="SUPFAM" id="SSF81324">
    <property type="entry name" value="Voltage-gated potassium channels"/>
    <property type="match status" value="1"/>
</dbReference>
<proteinExistence type="evidence at protein level"/>
<reference key="1">
    <citation type="journal article" date="1996" name="Science">
        <title>Small-conductance, calcium-activated potassium channels from mammalian brain.</title>
        <authorList>
            <person name="Koehler M."/>
            <person name="Hirschberg B."/>
            <person name="Bond C.T."/>
            <person name="Kinzie J.M."/>
            <person name="Marrion N.V."/>
            <person name="Maylie J."/>
            <person name="Adelman J.P."/>
        </authorList>
    </citation>
    <scope>NUCLEOTIDE SEQUENCE [MRNA]</scope>
    <source>
        <strain>Sprague-Dawley</strain>
        <tissue>Brain</tissue>
    </source>
</reference>
<reference key="2">
    <citation type="journal article" date="2001" name="J. Physiol. (Lond.)">
        <title>SK3 is an important component of K(+) channels mediating the afterhyperpolarization in cultured rat SCG neurones.</title>
        <authorList>
            <person name="Hosseini R."/>
            <person name="Benton D.C."/>
            <person name="Dunn P.M."/>
            <person name="Jenkinson D.H."/>
            <person name="Moss G.W."/>
        </authorList>
    </citation>
    <scope>NUCLEOTIDE SEQUENCE [MRNA]</scope>
    <scope>FUNCTION</scope>
    <scope>TRANSPORTER ACTIVITY</scope>
    <scope>ACTIVITY REGULATION</scope>
    <source>
        <strain>Sprague-Dawley</strain>
    </source>
</reference>
<reference key="3">
    <citation type="journal article" date="2001" name="Am. J. Physiol.">
        <title>Cloning and functional expression of a liver isoform of the small conductance Ca2+-activated K+ channel SK3.</title>
        <authorList>
            <person name="Barfod E.T."/>
            <person name="Moore A.L."/>
            <person name="Lidofsky S.D."/>
        </authorList>
    </citation>
    <scope>NUCLEOTIDE SEQUENCE [MRNA]</scope>
    <scope>FUNCTION</scope>
    <scope>TRANSPORTER ACTIVITY</scope>
    <scope>SUBCELLULAR LOCATION</scope>
    <scope>ACTIVITY REGULATION</scope>
    <scope>VARIANT 78-GLN-GLN-79 DEL</scope>
    <source>
        <strain>Sprague-Dawley</strain>
        <tissue>Liver</tissue>
    </source>
</reference>
<reference key="4">
    <citation type="journal article" date="2004" name="J. Biol. Chem.">
        <title>The SK3 subunit of small conductance Ca2+-activated K+ channels interacts with both SK1 and SK2 subunits in a heterologous expression system.</title>
        <authorList>
            <person name="Monaghan A.S."/>
            <person name="Benton D.C."/>
            <person name="Bahia P.K."/>
            <person name="Hosseini R."/>
            <person name="Shah Y.A."/>
            <person name="Haylett D.G."/>
            <person name="Moss G.W."/>
        </authorList>
    </citation>
    <scope>SUBUNIT</scope>
    <scope>SUBCELLULAR LOCATION</scope>
</reference>
<gene>
    <name evidence="11" type="primary">Kcnn3</name>
</gene>
<accession>P70605</accession>
<accession>Q9EQ81</accession>
<accession>Q9ERQ4</accession>
<feature type="chain" id="PRO_0000155016" description="Small conductance calcium-activated potassium channel protein 3">
    <location>
        <begin position="1"/>
        <end position="732"/>
    </location>
</feature>
<feature type="transmembrane region" description="Helical; Name=Segment S1" evidence="5">
    <location>
        <begin position="289"/>
        <end position="309"/>
    </location>
</feature>
<feature type="transmembrane region" description="Helical; Name=Segment S2" evidence="5">
    <location>
        <begin position="316"/>
        <end position="336"/>
    </location>
</feature>
<feature type="transmembrane region" description="Helical; Name=Segment S3" evidence="5">
    <location>
        <begin position="367"/>
        <end position="387"/>
    </location>
</feature>
<feature type="transmembrane region" description="Helical; Name=Segment S4" evidence="5">
    <location>
        <begin position="406"/>
        <end position="426"/>
    </location>
</feature>
<feature type="transmembrane region" description="Helical; Name=Segment S5" evidence="5">
    <location>
        <begin position="455"/>
        <end position="475"/>
    </location>
</feature>
<feature type="intramembrane region" description="Pore-forming; Name=Segment H5" evidence="5">
    <location>
        <begin position="495"/>
        <end position="515"/>
    </location>
</feature>
<feature type="transmembrane region" description="Helical; Name=Segment S6" evidence="5">
    <location>
        <begin position="524"/>
        <end position="544"/>
    </location>
</feature>
<feature type="region of interest" description="Disordered" evidence="6">
    <location>
        <begin position="1"/>
        <end position="82"/>
    </location>
</feature>
<feature type="region of interest" description="Disordered" evidence="6">
    <location>
        <begin position="103"/>
        <end position="162"/>
    </location>
</feature>
<feature type="region of interest" description="Disordered" evidence="6">
    <location>
        <begin position="241"/>
        <end position="260"/>
    </location>
</feature>
<feature type="region of interest" description="Calmodulin-binding" evidence="1">
    <location>
        <begin position="562"/>
        <end position="638"/>
    </location>
</feature>
<feature type="region of interest" description="Disordered" evidence="6">
    <location>
        <begin position="704"/>
        <end position="732"/>
    </location>
</feature>
<feature type="coiled-coil region" evidence="5">
    <location>
        <begin position="643"/>
        <end position="670"/>
    </location>
</feature>
<feature type="compositionally biased region" description="Basic and acidic residues" evidence="6">
    <location>
        <begin position="1"/>
        <end position="11"/>
    </location>
</feature>
<feature type="compositionally biased region" description="Pro residues" evidence="6">
    <location>
        <begin position="35"/>
        <end position="59"/>
    </location>
</feature>
<feature type="compositionally biased region" description="Low complexity" evidence="6">
    <location>
        <begin position="60"/>
        <end position="82"/>
    </location>
</feature>
<feature type="compositionally biased region" description="Polar residues" evidence="6">
    <location>
        <begin position="113"/>
        <end position="133"/>
    </location>
</feature>
<feature type="compositionally biased region" description="Low complexity" evidence="6">
    <location>
        <begin position="139"/>
        <end position="148"/>
    </location>
</feature>
<feature type="compositionally biased region" description="Polar residues" evidence="6">
    <location>
        <begin position="241"/>
        <end position="257"/>
    </location>
</feature>
<feature type="compositionally biased region" description="Low complexity" evidence="6">
    <location>
        <begin position="718"/>
        <end position="732"/>
    </location>
</feature>
<feature type="modified residue" description="Phosphoserine" evidence="2">
    <location>
        <position position="168"/>
    </location>
</feature>
<feature type="sequence variant" evidence="7">
    <location>
        <begin position="78"/>
        <end position="79"/>
    </location>
</feature>
<feature type="sequence conflict" description="In Ref. 1; AAB81653." evidence="10" ref="1">
    <original>D</original>
    <variation>E</variation>
    <location>
        <position position="9"/>
    </location>
</feature>
<feature type="sequence conflict" description="In Ref. 1; AAB81653." evidence="10" ref="1">
    <original>L</original>
    <variation>V</variation>
    <location>
        <position position="96"/>
    </location>
</feature>
<feature type="sequence conflict" description="In Ref. 1; AAB81653." evidence="10" ref="1">
    <original>L</original>
    <variation>V</variation>
    <location>
        <position position="138"/>
    </location>
</feature>
<feature type="sequence conflict" description="In Ref. 1; AAB81653." evidence="10" ref="1">
    <original>L</original>
    <variation>V</variation>
    <location>
        <position position="162"/>
    </location>
</feature>
<feature type="sequence conflict" description="In Ref. 1; AAB81653." evidence="10" ref="1">
    <original>S</original>
    <variation>N</variation>
    <location>
        <position position="190"/>
    </location>
</feature>
<protein>
    <recommendedName>
        <fullName evidence="10">Small conductance calcium-activated potassium channel protein 3</fullName>
        <shortName>SK3</shortName>
        <shortName>SKCa 3</shortName>
        <shortName>SKCa3</shortName>
    </recommendedName>
    <alternativeName>
        <fullName>KCa2.3</fullName>
    </alternativeName>
</protein>
<name>KCNN3_RAT</name>
<comment type="function">
    <text evidence="4 7 8">Small conductance calcium-activated potassium channel that mediates the voltage-independent transmembrane transfer of potassium across the cell membrane through a constitutive interaction with calmodulin which binds the intracellular calcium allowing its opening (PubMed:11245600, PubMed:11533126). The current is characterized by a voltage-independent activation, an intracellular calcium concentration increase-dependent activation and a single-channel conductance of 10 picosiemens (PubMed:11245600, PubMed:11533126). Also presents an inwardly rectifying current, thus reducing its already small outward conductance of potassium ions, which is particularly the case when the membrane potential displays positive values, above + 20 mV (By similarity). Activation is followed by membrane hyperpolarization (PubMed:11533126). Thought to regulate neuronal excitability by contributing to the slow component of synaptic afterhyperpolarization (PubMed:11533126).</text>
</comment>
<comment type="catalytic activity">
    <reaction evidence="7 8">
        <text>K(+)(in) = K(+)(out)</text>
        <dbReference type="Rhea" id="RHEA:29463"/>
        <dbReference type="ChEBI" id="CHEBI:29103"/>
    </reaction>
</comment>
<comment type="activity regulation">
    <text evidence="7 8">Inhibited by bee venom neurotoxin apamin.</text>
</comment>
<comment type="subunit">
    <text evidence="3 4 9">Homodimer (By similarity). Heteromultimer with KCNN2 or KCNN1; this modulates plasma membrane expression and consequently the small conductance calcium-activated potassium channel activity (PubMed:14559917). The complex is composed of 4 channel subunits each of which binds to a calmodulin subunit which regulates the channel activity through calcium-binding (By similarity). Interacts with CALM1 (By similarity).</text>
</comment>
<comment type="subcellular location">
    <subcellularLocation>
        <location evidence="7 9">Cell membrane</location>
        <topology>Multi-pass membrane protein</topology>
    </subcellularLocation>
    <subcellularLocation>
        <location evidence="2">Cytoplasm</location>
        <location evidence="2">Myofibril</location>
        <location evidence="2">Sarcomere</location>
        <location evidence="2">Z line</location>
    </subcellularLocation>
</comment>
<comment type="domain">
    <text evidence="4">The coiled-coil domaim mediates heteromeic assembly.</text>
</comment>
<comment type="similarity">
    <text evidence="10">Belongs to the potassium channel KCNN family. KCa2.3/KCNN3 subfamily.</text>
</comment>
<keyword id="KW-0112">Calmodulin-binding</keyword>
<keyword id="KW-1003">Cell membrane</keyword>
<keyword id="KW-0175">Coiled coil</keyword>
<keyword id="KW-0963">Cytoplasm</keyword>
<keyword id="KW-0407">Ion channel</keyword>
<keyword id="KW-0406">Ion transport</keyword>
<keyword id="KW-0472">Membrane</keyword>
<keyword id="KW-0597">Phosphoprotein</keyword>
<keyword id="KW-1185">Reference proteome</keyword>
<keyword id="KW-0812">Transmembrane</keyword>
<keyword id="KW-1133">Transmembrane helix</keyword>
<keyword id="KW-0813">Transport</keyword>
<organism>
    <name type="scientific">Rattus norvegicus</name>
    <name type="common">Rat</name>
    <dbReference type="NCBI Taxonomy" id="10116"/>
    <lineage>
        <taxon>Eukaryota</taxon>
        <taxon>Metazoa</taxon>
        <taxon>Chordata</taxon>
        <taxon>Craniata</taxon>
        <taxon>Vertebrata</taxon>
        <taxon>Euteleostomi</taxon>
        <taxon>Mammalia</taxon>
        <taxon>Eutheria</taxon>
        <taxon>Euarchontoglires</taxon>
        <taxon>Glires</taxon>
        <taxon>Rodentia</taxon>
        <taxon>Myomorpha</taxon>
        <taxon>Muroidea</taxon>
        <taxon>Muridae</taxon>
        <taxon>Murinae</taxon>
        <taxon>Rattus</taxon>
    </lineage>
</organism>